<protein>
    <recommendedName>
        <fullName evidence="1">Small ribosomal subunit protein uS2</fullName>
    </recommendedName>
    <alternativeName>
        <fullName evidence="2">30S ribosomal protein S2</fullName>
    </alternativeName>
</protein>
<feature type="chain" id="PRO_1000204890" description="Small ribosomal subunit protein uS2">
    <location>
        <begin position="1"/>
        <end position="245"/>
    </location>
</feature>
<name>RS2_PSEFS</name>
<reference key="1">
    <citation type="journal article" date="2009" name="Genome Biol.">
        <title>Genomic and genetic analyses of diversity and plant interactions of Pseudomonas fluorescens.</title>
        <authorList>
            <person name="Silby M.W."/>
            <person name="Cerdeno-Tarraga A.M."/>
            <person name="Vernikos G.S."/>
            <person name="Giddens S.R."/>
            <person name="Jackson R.W."/>
            <person name="Preston G.M."/>
            <person name="Zhang X.-X."/>
            <person name="Moon C.D."/>
            <person name="Gehrig S.M."/>
            <person name="Godfrey S.A.C."/>
            <person name="Knight C.G."/>
            <person name="Malone J.G."/>
            <person name="Robinson Z."/>
            <person name="Spiers A.J."/>
            <person name="Harris S."/>
            <person name="Challis G.L."/>
            <person name="Yaxley A.M."/>
            <person name="Harris D."/>
            <person name="Seeger K."/>
            <person name="Murphy L."/>
            <person name="Rutter S."/>
            <person name="Squares R."/>
            <person name="Quail M.A."/>
            <person name="Saunders E."/>
            <person name="Mavromatis K."/>
            <person name="Brettin T.S."/>
            <person name="Bentley S.D."/>
            <person name="Hothersall J."/>
            <person name="Stephens E."/>
            <person name="Thomas C.M."/>
            <person name="Parkhill J."/>
            <person name="Levy S.B."/>
            <person name="Rainey P.B."/>
            <person name="Thomson N.R."/>
        </authorList>
    </citation>
    <scope>NUCLEOTIDE SEQUENCE [LARGE SCALE GENOMIC DNA]</scope>
    <source>
        <strain>SBW25</strain>
    </source>
</reference>
<comment type="similarity">
    <text evidence="1">Belongs to the universal ribosomal protein uS2 family.</text>
</comment>
<keyword id="KW-0687">Ribonucleoprotein</keyword>
<keyword id="KW-0689">Ribosomal protein</keyword>
<organism>
    <name type="scientific">Pseudomonas fluorescens (strain SBW25)</name>
    <dbReference type="NCBI Taxonomy" id="216595"/>
    <lineage>
        <taxon>Bacteria</taxon>
        <taxon>Pseudomonadati</taxon>
        <taxon>Pseudomonadota</taxon>
        <taxon>Gammaproteobacteria</taxon>
        <taxon>Pseudomonadales</taxon>
        <taxon>Pseudomonadaceae</taxon>
        <taxon>Pseudomonas</taxon>
    </lineage>
</organism>
<gene>
    <name evidence="1" type="primary">rpsB</name>
    <name type="ordered locus">PFLU_1270</name>
</gene>
<proteinExistence type="inferred from homology"/>
<dbReference type="EMBL" id="AM181176">
    <property type="protein sequence ID" value="CAY47527.1"/>
    <property type="molecule type" value="Genomic_DNA"/>
</dbReference>
<dbReference type="RefSeq" id="WP_003189158.1">
    <property type="nucleotide sequence ID" value="NC_012660.1"/>
</dbReference>
<dbReference type="SMR" id="C3K5E6"/>
<dbReference type="STRING" id="294.SRM1_01129"/>
<dbReference type="GeneID" id="93462886"/>
<dbReference type="eggNOG" id="COG0052">
    <property type="taxonomic scope" value="Bacteria"/>
</dbReference>
<dbReference type="HOGENOM" id="CLU_040318_1_0_6"/>
<dbReference type="OrthoDB" id="9808036at2"/>
<dbReference type="GO" id="GO:0022627">
    <property type="term" value="C:cytosolic small ribosomal subunit"/>
    <property type="evidence" value="ECO:0007669"/>
    <property type="project" value="TreeGrafter"/>
</dbReference>
<dbReference type="GO" id="GO:0003735">
    <property type="term" value="F:structural constituent of ribosome"/>
    <property type="evidence" value="ECO:0007669"/>
    <property type="project" value="InterPro"/>
</dbReference>
<dbReference type="GO" id="GO:0006412">
    <property type="term" value="P:translation"/>
    <property type="evidence" value="ECO:0007669"/>
    <property type="project" value="UniProtKB-UniRule"/>
</dbReference>
<dbReference type="CDD" id="cd01425">
    <property type="entry name" value="RPS2"/>
    <property type="match status" value="1"/>
</dbReference>
<dbReference type="FunFam" id="1.10.287.610:FF:000001">
    <property type="entry name" value="30S ribosomal protein S2"/>
    <property type="match status" value="1"/>
</dbReference>
<dbReference type="Gene3D" id="3.40.50.10490">
    <property type="entry name" value="Glucose-6-phosphate isomerase like protein, domain 1"/>
    <property type="match status" value="1"/>
</dbReference>
<dbReference type="Gene3D" id="1.10.287.610">
    <property type="entry name" value="Helix hairpin bin"/>
    <property type="match status" value="1"/>
</dbReference>
<dbReference type="HAMAP" id="MF_00291_B">
    <property type="entry name" value="Ribosomal_uS2_B"/>
    <property type="match status" value="1"/>
</dbReference>
<dbReference type="InterPro" id="IPR001865">
    <property type="entry name" value="Ribosomal_uS2"/>
</dbReference>
<dbReference type="InterPro" id="IPR005706">
    <property type="entry name" value="Ribosomal_uS2_bac/mit/plastid"/>
</dbReference>
<dbReference type="InterPro" id="IPR018130">
    <property type="entry name" value="Ribosomal_uS2_CS"/>
</dbReference>
<dbReference type="InterPro" id="IPR023591">
    <property type="entry name" value="Ribosomal_uS2_flav_dom_sf"/>
</dbReference>
<dbReference type="NCBIfam" id="TIGR01011">
    <property type="entry name" value="rpsB_bact"/>
    <property type="match status" value="1"/>
</dbReference>
<dbReference type="PANTHER" id="PTHR12534">
    <property type="entry name" value="30S RIBOSOMAL PROTEIN S2 PROKARYOTIC AND ORGANELLAR"/>
    <property type="match status" value="1"/>
</dbReference>
<dbReference type="PANTHER" id="PTHR12534:SF0">
    <property type="entry name" value="SMALL RIBOSOMAL SUBUNIT PROTEIN US2M"/>
    <property type="match status" value="1"/>
</dbReference>
<dbReference type="Pfam" id="PF00318">
    <property type="entry name" value="Ribosomal_S2"/>
    <property type="match status" value="1"/>
</dbReference>
<dbReference type="PRINTS" id="PR00395">
    <property type="entry name" value="RIBOSOMALS2"/>
</dbReference>
<dbReference type="SUPFAM" id="SSF52313">
    <property type="entry name" value="Ribosomal protein S2"/>
    <property type="match status" value="1"/>
</dbReference>
<dbReference type="PROSITE" id="PS00962">
    <property type="entry name" value="RIBOSOMAL_S2_1"/>
    <property type="match status" value="1"/>
</dbReference>
<dbReference type="PROSITE" id="PS00963">
    <property type="entry name" value="RIBOSOMAL_S2_2"/>
    <property type="match status" value="1"/>
</dbReference>
<accession>C3K5E6</accession>
<evidence type="ECO:0000255" key="1">
    <source>
        <dbReference type="HAMAP-Rule" id="MF_00291"/>
    </source>
</evidence>
<evidence type="ECO:0000305" key="2"/>
<sequence length="245" mass="27095">MSQVNMRDMLKAGVHFGHQTRYWNPKMGKYIFGARNKIHIINLEKTLPMFNEALTFVERLAQGKNKILFVGTKRSAGKIVAEEAARCGSPYVDHRWLGGMLTNFKTIRASIKRLRDLEVQAEDGTFAKLTKKEALMRSRDLEKLDRSLGGIKDMGGLPDALFVIDVDHERIAITEANKLGIPVIGVVDTNSSPEGVDYIIPGNDDAIRAIQLYMGSMADAVIRGRNHVAGGTEQFVEEAPVAAAE</sequence>